<organism>
    <name type="scientific">Haemophilus influenzae (strain ATCC 51907 / DSM 11121 / KW20 / Rd)</name>
    <dbReference type="NCBI Taxonomy" id="71421"/>
    <lineage>
        <taxon>Bacteria</taxon>
        <taxon>Pseudomonadati</taxon>
        <taxon>Pseudomonadota</taxon>
        <taxon>Gammaproteobacteria</taxon>
        <taxon>Pasteurellales</taxon>
        <taxon>Pasteurellaceae</taxon>
        <taxon>Haemophilus</taxon>
    </lineage>
</organism>
<keyword id="KW-1185">Reference proteome</keyword>
<keyword id="KW-0732">Signal</keyword>
<gene>
    <name type="ordered locus">HI_1492</name>
</gene>
<proteinExistence type="inferred from homology"/>
<reference key="1">
    <citation type="journal article" date="1995" name="Science">
        <title>Whole-genome random sequencing and assembly of Haemophilus influenzae Rd.</title>
        <authorList>
            <person name="Fleischmann R.D."/>
            <person name="Adams M.D."/>
            <person name="White O."/>
            <person name="Clayton R.A."/>
            <person name="Kirkness E.F."/>
            <person name="Kerlavage A.R."/>
            <person name="Bult C.J."/>
            <person name="Tomb J.-F."/>
            <person name="Dougherty B.A."/>
            <person name="Merrick J.M."/>
            <person name="McKenney K."/>
            <person name="Sutton G.G."/>
            <person name="FitzHugh W."/>
            <person name="Fields C.A."/>
            <person name="Gocayne J.D."/>
            <person name="Scott J.D."/>
            <person name="Shirley R."/>
            <person name="Liu L.-I."/>
            <person name="Glodek A."/>
            <person name="Kelley J.M."/>
            <person name="Weidman J.F."/>
            <person name="Phillips C.A."/>
            <person name="Spriggs T."/>
            <person name="Hedblom E."/>
            <person name="Cotton M.D."/>
            <person name="Utterback T.R."/>
            <person name="Hanna M.C."/>
            <person name="Nguyen D.T."/>
            <person name="Saudek D.M."/>
            <person name="Brandon R.C."/>
            <person name="Fine L.D."/>
            <person name="Fritchman J.L."/>
            <person name="Fuhrmann J.L."/>
            <person name="Geoghagen N.S.M."/>
            <person name="Gnehm C.L."/>
            <person name="McDonald L.A."/>
            <person name="Small K.V."/>
            <person name="Fraser C.M."/>
            <person name="Smith H.O."/>
            <person name="Venter J.C."/>
        </authorList>
    </citation>
    <scope>NUCLEOTIDE SEQUENCE [LARGE SCALE GENOMIC DNA]</scope>
    <source>
        <strain>ATCC 51907 / DSM 11121 / KW20 / Rd</strain>
    </source>
</reference>
<name>Y1492_HAEIN</name>
<protein>
    <recommendedName>
        <fullName>Uncharacterized protein HI_1492</fullName>
    </recommendedName>
</protein>
<accession>P44217</accession>
<feature type="signal peptide" description="Or 19" evidence="1">
    <location>
        <begin position="1"/>
        <end position="21"/>
    </location>
</feature>
<feature type="chain" id="PRO_0000013973" description="Uncharacterized protein HI_1492">
    <location>
        <begin position="22"/>
        <end position="168"/>
    </location>
</feature>
<evidence type="ECO:0000255" key="1"/>
<sequence length="168" mass="19213">MKLLKALAVLSLATISSHSFAVDGFQNVKFGASKTEVRNAYQKCQWQKDEYDLFCPNFTLGAIKDTGAYFYFIDDKFERIAINIPNVNIDGIGQALSEKYTLSSQPTQRELANPKPNNVYDFGFDKDTILIRYTYDNDMTEEIFLIYTTPDFNNKLQTKDAQSVKDQL</sequence>
<dbReference type="EMBL" id="L42023">
    <property type="protein sequence ID" value="AAC23144.1"/>
    <property type="molecule type" value="Genomic_DNA"/>
</dbReference>
<dbReference type="PIR" id="B64032">
    <property type="entry name" value="B64032"/>
</dbReference>
<dbReference type="RefSeq" id="NP_439641.1">
    <property type="nucleotide sequence ID" value="NC_000907.1"/>
</dbReference>
<dbReference type="STRING" id="71421.HI_1492"/>
<dbReference type="EnsemblBacteria" id="AAC23144">
    <property type="protein sequence ID" value="AAC23144"/>
    <property type="gene ID" value="HI_1492"/>
</dbReference>
<dbReference type="KEGG" id="hin:HI_1492"/>
<dbReference type="PATRIC" id="fig|71421.8.peg.1560"/>
<dbReference type="HOGENOM" id="CLU_1584169_0_0_6"/>
<dbReference type="BioCyc" id="HINF71421:G1GJ1-1515-MONOMER"/>
<dbReference type="Proteomes" id="UP000000579">
    <property type="component" value="Chromosome"/>
</dbReference>